<proteinExistence type="inferred from homology"/>
<dbReference type="EMBL" id="CP000853">
    <property type="protein sequence ID" value="ABW18071.1"/>
    <property type="molecule type" value="Genomic_DNA"/>
</dbReference>
<dbReference type="RefSeq" id="WP_012158385.1">
    <property type="nucleotide sequence ID" value="NC_009922.1"/>
</dbReference>
<dbReference type="SMR" id="A8MLF7"/>
<dbReference type="STRING" id="350688.Clos_0509"/>
<dbReference type="KEGG" id="aoe:Clos_0509"/>
<dbReference type="eggNOG" id="COG0098">
    <property type="taxonomic scope" value="Bacteria"/>
</dbReference>
<dbReference type="HOGENOM" id="CLU_065898_2_2_9"/>
<dbReference type="OrthoDB" id="9809045at2"/>
<dbReference type="Proteomes" id="UP000000269">
    <property type="component" value="Chromosome"/>
</dbReference>
<dbReference type="GO" id="GO:0015935">
    <property type="term" value="C:small ribosomal subunit"/>
    <property type="evidence" value="ECO:0007669"/>
    <property type="project" value="InterPro"/>
</dbReference>
<dbReference type="GO" id="GO:0019843">
    <property type="term" value="F:rRNA binding"/>
    <property type="evidence" value="ECO:0007669"/>
    <property type="project" value="UniProtKB-UniRule"/>
</dbReference>
<dbReference type="GO" id="GO:0003735">
    <property type="term" value="F:structural constituent of ribosome"/>
    <property type="evidence" value="ECO:0007669"/>
    <property type="project" value="InterPro"/>
</dbReference>
<dbReference type="GO" id="GO:0006412">
    <property type="term" value="P:translation"/>
    <property type="evidence" value="ECO:0007669"/>
    <property type="project" value="UniProtKB-UniRule"/>
</dbReference>
<dbReference type="FunFam" id="3.30.160.20:FF:000001">
    <property type="entry name" value="30S ribosomal protein S5"/>
    <property type="match status" value="1"/>
</dbReference>
<dbReference type="FunFam" id="3.30.230.10:FF:000002">
    <property type="entry name" value="30S ribosomal protein S5"/>
    <property type="match status" value="1"/>
</dbReference>
<dbReference type="Gene3D" id="3.30.160.20">
    <property type="match status" value="1"/>
</dbReference>
<dbReference type="Gene3D" id="3.30.230.10">
    <property type="match status" value="1"/>
</dbReference>
<dbReference type="HAMAP" id="MF_01307_B">
    <property type="entry name" value="Ribosomal_uS5_B"/>
    <property type="match status" value="1"/>
</dbReference>
<dbReference type="InterPro" id="IPR020568">
    <property type="entry name" value="Ribosomal_Su5_D2-typ_SF"/>
</dbReference>
<dbReference type="InterPro" id="IPR000851">
    <property type="entry name" value="Ribosomal_uS5"/>
</dbReference>
<dbReference type="InterPro" id="IPR005712">
    <property type="entry name" value="Ribosomal_uS5_bac-type"/>
</dbReference>
<dbReference type="InterPro" id="IPR005324">
    <property type="entry name" value="Ribosomal_uS5_C"/>
</dbReference>
<dbReference type="InterPro" id="IPR013810">
    <property type="entry name" value="Ribosomal_uS5_N"/>
</dbReference>
<dbReference type="InterPro" id="IPR018192">
    <property type="entry name" value="Ribosomal_uS5_N_CS"/>
</dbReference>
<dbReference type="InterPro" id="IPR014721">
    <property type="entry name" value="Ribsml_uS5_D2-typ_fold_subgr"/>
</dbReference>
<dbReference type="NCBIfam" id="TIGR01021">
    <property type="entry name" value="rpsE_bact"/>
    <property type="match status" value="1"/>
</dbReference>
<dbReference type="PANTHER" id="PTHR48277">
    <property type="entry name" value="MITOCHONDRIAL RIBOSOMAL PROTEIN S5"/>
    <property type="match status" value="1"/>
</dbReference>
<dbReference type="PANTHER" id="PTHR48277:SF1">
    <property type="entry name" value="MITOCHONDRIAL RIBOSOMAL PROTEIN S5"/>
    <property type="match status" value="1"/>
</dbReference>
<dbReference type="Pfam" id="PF00333">
    <property type="entry name" value="Ribosomal_S5"/>
    <property type="match status" value="1"/>
</dbReference>
<dbReference type="Pfam" id="PF03719">
    <property type="entry name" value="Ribosomal_S5_C"/>
    <property type="match status" value="1"/>
</dbReference>
<dbReference type="SUPFAM" id="SSF54768">
    <property type="entry name" value="dsRNA-binding domain-like"/>
    <property type="match status" value="1"/>
</dbReference>
<dbReference type="SUPFAM" id="SSF54211">
    <property type="entry name" value="Ribosomal protein S5 domain 2-like"/>
    <property type="match status" value="1"/>
</dbReference>
<dbReference type="PROSITE" id="PS00585">
    <property type="entry name" value="RIBOSOMAL_S5"/>
    <property type="match status" value="1"/>
</dbReference>
<dbReference type="PROSITE" id="PS50881">
    <property type="entry name" value="S5_DSRBD"/>
    <property type="match status" value="1"/>
</dbReference>
<gene>
    <name evidence="1" type="primary">rpsE</name>
    <name type="ordered locus">Clos_0509</name>
</gene>
<feature type="chain" id="PRO_0000323061" description="Small ribosomal subunit protein uS5">
    <location>
        <begin position="1"/>
        <end position="168"/>
    </location>
</feature>
<feature type="domain" description="S5 DRBM" evidence="1">
    <location>
        <begin position="13"/>
        <end position="76"/>
    </location>
</feature>
<evidence type="ECO:0000255" key="1">
    <source>
        <dbReference type="HAMAP-Rule" id="MF_01307"/>
    </source>
</evidence>
<evidence type="ECO:0000305" key="2"/>
<protein>
    <recommendedName>
        <fullName evidence="1">Small ribosomal subunit protein uS5</fullName>
    </recommendedName>
    <alternativeName>
        <fullName evidence="2">30S ribosomal protein S5</fullName>
    </alternativeName>
</protein>
<comment type="function">
    <text evidence="1">With S4 and S12 plays an important role in translational accuracy.</text>
</comment>
<comment type="function">
    <text evidence="1">Located at the back of the 30S subunit body where it stabilizes the conformation of the head with respect to the body.</text>
</comment>
<comment type="subunit">
    <text evidence="1">Part of the 30S ribosomal subunit. Contacts proteins S4 and S8.</text>
</comment>
<comment type="domain">
    <text>The N-terminal domain interacts with the head of the 30S subunit; the C-terminal domain interacts with the body and contacts protein S4. The interaction surface between S4 and S5 is involved in control of translational fidelity.</text>
</comment>
<comment type="similarity">
    <text evidence="1">Belongs to the universal ribosomal protein uS5 family.</text>
</comment>
<organism>
    <name type="scientific">Alkaliphilus oremlandii (strain OhILAs)</name>
    <name type="common">Clostridium oremlandii (strain OhILAs)</name>
    <dbReference type="NCBI Taxonomy" id="350688"/>
    <lineage>
        <taxon>Bacteria</taxon>
        <taxon>Bacillati</taxon>
        <taxon>Bacillota</taxon>
        <taxon>Clostridia</taxon>
        <taxon>Peptostreptococcales</taxon>
        <taxon>Natronincolaceae</taxon>
        <taxon>Alkaliphilus</taxon>
    </lineage>
</organism>
<name>RS5_ALKOO</name>
<sequence length="168" mass="17847">MHNKRIDASQLELKEQVVDIKRVTKVVKGGRNFRFSALVIVGDENGYVGVGSGKAMEIPDAIRKGIEDAKKNLIHVPIVGTTVPHETIGIFGAGNVLIMPAKEGTGIIAGGPVRTVLELAGFKDVRAKSLGTNNAKNMVNAAINGLSQLKRAEEVAKLRGKSVEELLG</sequence>
<reference key="1">
    <citation type="submission" date="2007-10" db="EMBL/GenBank/DDBJ databases">
        <title>Complete genome of Alkaliphilus oremlandii OhILAs.</title>
        <authorList>
            <person name="Copeland A."/>
            <person name="Lucas S."/>
            <person name="Lapidus A."/>
            <person name="Barry K."/>
            <person name="Detter J.C."/>
            <person name="Glavina del Rio T."/>
            <person name="Hammon N."/>
            <person name="Israni S."/>
            <person name="Dalin E."/>
            <person name="Tice H."/>
            <person name="Pitluck S."/>
            <person name="Chain P."/>
            <person name="Malfatti S."/>
            <person name="Shin M."/>
            <person name="Vergez L."/>
            <person name="Schmutz J."/>
            <person name="Larimer F."/>
            <person name="Land M."/>
            <person name="Hauser L."/>
            <person name="Kyrpides N."/>
            <person name="Mikhailova N."/>
            <person name="Stolz J.F."/>
            <person name="Dawson A."/>
            <person name="Fisher E."/>
            <person name="Crable B."/>
            <person name="Perera E."/>
            <person name="Lisak J."/>
            <person name="Ranganathan M."/>
            <person name="Basu P."/>
            <person name="Richardson P."/>
        </authorList>
    </citation>
    <scope>NUCLEOTIDE SEQUENCE [LARGE SCALE GENOMIC DNA]</scope>
    <source>
        <strain>OhILAs</strain>
    </source>
</reference>
<accession>A8MLF7</accession>
<keyword id="KW-1185">Reference proteome</keyword>
<keyword id="KW-0687">Ribonucleoprotein</keyword>
<keyword id="KW-0689">Ribosomal protein</keyword>
<keyword id="KW-0694">RNA-binding</keyword>
<keyword id="KW-0699">rRNA-binding</keyword>